<sequence length="108" mass="11310">MADKVIALACAAGMSTSLLVSKMQKAAADNGKDYEIFAKSTADIDNMLAGTGSPKPDVLLLGPQVAFMKGEVAKKAEIAGVPMDVIKMQDYGMMRGDKVLAAAENLMN</sequence>
<feature type="chain" id="PRO_5004324902" description="PTS system cellobiose-specific EIIB component">
    <location>
        <begin position="1"/>
        <end position="108"/>
    </location>
</feature>
<feature type="domain" description="PTS EIIB type-3" evidence="2">
    <location>
        <begin position="3"/>
        <end position="108"/>
    </location>
</feature>
<feature type="active site" description="Phosphocysteine intermediate" evidence="1">
    <location>
        <position position="10"/>
    </location>
</feature>
<feature type="modified residue" description="Phosphocysteine; by EIIA" evidence="2">
    <location>
        <position position="10"/>
    </location>
</feature>
<name>PTCB_LACLA</name>
<proteinExistence type="evidence at protein level"/>
<reference key="1">
    <citation type="journal article" date="2001" name="Genome Res.">
        <title>The complete genome sequence of the lactic acid bacterium Lactococcus lactis ssp. lactis IL1403.</title>
        <authorList>
            <person name="Bolotin A."/>
            <person name="Wincker P."/>
            <person name="Mauger S."/>
            <person name="Jaillon O."/>
            <person name="Malarme K."/>
            <person name="Weissenbach J."/>
            <person name="Ehrlich S.D."/>
            <person name="Sorokin A."/>
        </authorList>
    </citation>
    <scope>NUCLEOTIDE SEQUENCE [LARGE SCALE GENOMIC DNA]</scope>
    <source>
        <strain>IL1403</strain>
    </source>
</reference>
<reference key="2">
    <citation type="journal article" date="2008" name="Arch. Microbiol.">
        <title>Identification and functional characterisation of cellobiose and lactose transport systems in Lactococcus lactis IL1403.</title>
        <authorList>
            <person name="Kowalczyk M."/>
            <person name="Cocaign-Bousquet M."/>
            <person name="Loubiere P."/>
            <person name="Bardowski J."/>
        </authorList>
    </citation>
    <scope>FUNCTION</scope>
    <scope>INDUCTION</scope>
    <source>
        <strain>IL1403</strain>
    </source>
</reference>
<reference key="3">
    <citation type="journal article" date="2011" name="Int. J. Food Microbiol.">
        <title>Genetic characterization of the CcpA-dependent, cellobiose-specific PTS system comprising CelB, PtcB and PtcA that transports lactose in Lactococcus lactis IL1403.</title>
        <authorList>
            <person name="Aleksandrzak-Piekarczyk T."/>
            <person name="Polak J."/>
            <person name="Jezierska B."/>
            <person name="Renault P."/>
            <person name="Bardowski J."/>
        </authorList>
    </citation>
    <scope>FUNCTION</scope>
    <scope>CATALYTIC ACTIVITY</scope>
    <scope>INDUCTION</scope>
    <scope>DISRUPTION PHENOTYPE</scope>
    <source>
        <strain>IL1403</strain>
    </source>
</reference>
<evidence type="ECO:0000250" key="1">
    <source>
        <dbReference type="UniProtKB" id="P69795"/>
    </source>
</evidence>
<evidence type="ECO:0000255" key="2">
    <source>
        <dbReference type="PROSITE-ProRule" id="PRU00423"/>
    </source>
</evidence>
<evidence type="ECO:0000269" key="3">
    <source>
    </source>
</evidence>
<evidence type="ECO:0000269" key="4">
    <source>
    </source>
</evidence>
<evidence type="ECO:0000303" key="5">
    <source>
    </source>
</evidence>
<evidence type="ECO:0000305" key="6"/>
<evidence type="ECO:0000305" key="7">
    <source>
    </source>
</evidence>
<evidence type="ECO:0000312" key="8">
    <source>
        <dbReference type="EMBL" id="AAK04511.1"/>
    </source>
</evidence>
<organism>
    <name type="scientific">Lactococcus lactis subsp. lactis (strain IL1403)</name>
    <name type="common">Streptococcus lactis</name>
    <dbReference type="NCBI Taxonomy" id="272623"/>
    <lineage>
        <taxon>Bacteria</taxon>
        <taxon>Bacillati</taxon>
        <taxon>Bacillota</taxon>
        <taxon>Bacilli</taxon>
        <taxon>Lactobacillales</taxon>
        <taxon>Streptococcaceae</taxon>
        <taxon>Lactococcus</taxon>
    </lineage>
</organism>
<protein>
    <recommendedName>
        <fullName evidence="6">PTS system cellobiose-specific EIIB component</fullName>
    </recommendedName>
    <alternativeName>
        <fullName evidence="6">Cellobiose-specific phosphotransferase enzyme IIB component</fullName>
        <ecNumber evidence="7">2.7.1.205</ecNumber>
    </alternativeName>
</protein>
<keyword id="KW-0418">Kinase</keyword>
<keyword id="KW-0597">Phosphoprotein</keyword>
<keyword id="KW-0598">Phosphotransferase system</keyword>
<keyword id="KW-1185">Reference proteome</keyword>
<keyword id="KW-0762">Sugar transport</keyword>
<keyword id="KW-0808">Transferase</keyword>
<keyword id="KW-0813">Transport</keyword>
<accession>Q9CIF0</accession>
<gene>
    <name evidence="5" type="primary">ptcB</name>
    <name evidence="6" type="ordered locus">LL0413</name>
    <name evidence="8" type="ORF">L18872</name>
</gene>
<comment type="function">
    <text evidence="1 3 4">The phosphoenolpyruvate-dependent sugar phosphotransferase system (sugar PTS), a major carbohydrate active transport system, catalyzes the phosphorylation of incoming sugar substrates concomitantly with their translocation across the cell membrane (By similarity). Involved in cellobiose transport with PtcA and CelB. This system can also transport lactose (PubMed:17909747, PubMed:21262549).</text>
</comment>
<comment type="catalytic activity">
    <reaction evidence="7">
        <text>D-cellobiose(out) + N(pros)-phospho-L-histidyl-[protein] = 6-phospho-beta-D-glucosyl-(1-&gt;4)-D-glucose(in) + L-histidyl-[protein]</text>
        <dbReference type="Rhea" id="RHEA:49292"/>
        <dbReference type="Rhea" id="RHEA-COMP:9745"/>
        <dbReference type="Rhea" id="RHEA-COMP:9746"/>
        <dbReference type="ChEBI" id="CHEBI:17057"/>
        <dbReference type="ChEBI" id="CHEBI:29979"/>
        <dbReference type="ChEBI" id="CHEBI:58312"/>
        <dbReference type="ChEBI" id="CHEBI:64837"/>
        <dbReference type="EC" id="2.7.1.205"/>
    </reaction>
</comment>
<comment type="induction">
    <text evidence="3 4">Induced by growth on cellobiose. Negativelly controlled by the CcpA regulator (PubMed:17909747, PubMed:21262549). Also induced in response to galactose (PubMed:21262549).</text>
</comment>
<comment type="domain">
    <text evidence="2">The PTS EIIB type-3 domain is phosphorylated by phospho-EIIA on a cysteinyl residue. Then, it transfers the phosphoryl group to the sugar substrate concomitantly with the sugar uptake processed by the PTS EIIC type-3 domain.</text>
</comment>
<comment type="disruption phenotype">
    <text evidence="4">Disruption of the gene abolishes growth on lactose and severely impairs growth on cellobiose.</text>
</comment>
<dbReference type="EC" id="2.7.1.205" evidence="7"/>
<dbReference type="EMBL" id="AE005176">
    <property type="protein sequence ID" value="AAK04511.1"/>
    <property type="molecule type" value="Genomic_DNA"/>
</dbReference>
<dbReference type="PIR" id="E86676">
    <property type="entry name" value="E86676"/>
</dbReference>
<dbReference type="RefSeq" id="NP_266569.1">
    <property type="nucleotide sequence ID" value="NC_002662.1"/>
</dbReference>
<dbReference type="RefSeq" id="WP_003131553.1">
    <property type="nucleotide sequence ID" value="NC_002662.1"/>
</dbReference>
<dbReference type="SMR" id="Q9CIF0"/>
<dbReference type="TCDB" id="4.A.3.2.4">
    <property type="family name" value="the pts lactose-n,n'-diacetylchitobiose-Beta-glucoside (lac) family"/>
</dbReference>
<dbReference type="PaxDb" id="272623-L18872"/>
<dbReference type="EnsemblBacteria" id="AAK04511">
    <property type="protein sequence ID" value="AAK04511"/>
    <property type="gene ID" value="L18872"/>
</dbReference>
<dbReference type="KEGG" id="lla:L18872"/>
<dbReference type="PATRIC" id="fig|272623.7.peg.448"/>
<dbReference type="eggNOG" id="COG1440">
    <property type="taxonomic scope" value="Bacteria"/>
</dbReference>
<dbReference type="HOGENOM" id="CLU_147323_1_1_9"/>
<dbReference type="OrthoDB" id="9808134at2"/>
<dbReference type="Proteomes" id="UP000002196">
    <property type="component" value="Chromosome"/>
</dbReference>
<dbReference type="GO" id="GO:0016301">
    <property type="term" value="F:kinase activity"/>
    <property type="evidence" value="ECO:0007669"/>
    <property type="project" value="UniProtKB-KW"/>
</dbReference>
<dbReference type="GO" id="GO:0008982">
    <property type="term" value="F:protein-N(PI)-phosphohistidine-sugar phosphotransferase activity"/>
    <property type="evidence" value="ECO:0007669"/>
    <property type="project" value="InterPro"/>
</dbReference>
<dbReference type="GO" id="GO:0009401">
    <property type="term" value="P:phosphoenolpyruvate-dependent sugar phosphotransferase system"/>
    <property type="evidence" value="ECO:0007669"/>
    <property type="project" value="UniProtKB-KW"/>
</dbReference>
<dbReference type="CDD" id="cd05564">
    <property type="entry name" value="PTS_IIB_chitobiose_lichenan"/>
    <property type="match status" value="1"/>
</dbReference>
<dbReference type="Gene3D" id="3.40.50.2300">
    <property type="match status" value="1"/>
</dbReference>
<dbReference type="InterPro" id="IPR036095">
    <property type="entry name" value="PTS_EIIB-like_sf"/>
</dbReference>
<dbReference type="InterPro" id="IPR003501">
    <property type="entry name" value="PTS_EIIB_2/3"/>
</dbReference>
<dbReference type="InterPro" id="IPR013012">
    <property type="entry name" value="PTS_EIIB_3"/>
</dbReference>
<dbReference type="InterPro" id="IPR051819">
    <property type="entry name" value="PTS_sugar-specific_EIIB"/>
</dbReference>
<dbReference type="PANTHER" id="PTHR34581">
    <property type="entry name" value="PTS SYSTEM N,N'-DIACETYLCHITOBIOSE-SPECIFIC EIIB COMPONENT"/>
    <property type="match status" value="1"/>
</dbReference>
<dbReference type="PANTHER" id="PTHR34581:SF2">
    <property type="entry name" value="PTS SYSTEM N,N'-DIACETYLCHITOBIOSE-SPECIFIC EIIB COMPONENT"/>
    <property type="match status" value="1"/>
</dbReference>
<dbReference type="Pfam" id="PF02302">
    <property type="entry name" value="PTS_IIB"/>
    <property type="match status" value="1"/>
</dbReference>
<dbReference type="SUPFAM" id="SSF52794">
    <property type="entry name" value="PTS system IIB component-like"/>
    <property type="match status" value="1"/>
</dbReference>
<dbReference type="PROSITE" id="PS51100">
    <property type="entry name" value="PTS_EIIB_TYPE_3"/>
    <property type="match status" value="1"/>
</dbReference>